<keyword id="KW-0025">Alternative splicing</keyword>
<keyword id="KW-0067">ATP-binding</keyword>
<keyword id="KW-0175">Coiled coil</keyword>
<keyword id="KW-0433">Leucine-rich repeat</keyword>
<keyword id="KW-0547">Nucleotide-binding</keyword>
<keyword id="KW-0597">Phosphoprotein</keyword>
<keyword id="KW-0611">Plant defense</keyword>
<keyword id="KW-1185">Reference proteome</keyword>
<keyword id="KW-0677">Repeat</keyword>
<evidence type="ECO:0000250" key="1"/>
<evidence type="ECO:0000255" key="2"/>
<evidence type="ECO:0000256" key="3">
    <source>
        <dbReference type="SAM" id="MobiDB-lite"/>
    </source>
</evidence>
<evidence type="ECO:0000303" key="4">
    <source>
    </source>
</evidence>
<evidence type="ECO:0000305" key="5"/>
<evidence type="ECO:0007744" key="6">
    <source>
    </source>
</evidence>
<evidence type="ECO:0007744" key="7">
    <source>
    </source>
</evidence>
<proteinExistence type="evidence at protein level"/>
<dbReference type="EMBL" id="AB018113">
    <property type="protein sequence ID" value="BAB09179.1"/>
    <property type="status" value="ALT_SEQ"/>
    <property type="molecule type" value="Genomic_DNA"/>
</dbReference>
<dbReference type="EMBL" id="CP002688">
    <property type="protein sequence ID" value="AED95262.1"/>
    <property type="molecule type" value="Genomic_DNA"/>
</dbReference>
<dbReference type="EMBL" id="CP002688">
    <property type="protein sequence ID" value="AED95263.1"/>
    <property type="molecule type" value="Genomic_DNA"/>
</dbReference>
<dbReference type="EMBL" id="AY065063">
    <property type="protein sequence ID" value="AAL57696.1"/>
    <property type="status" value="ALT_INIT"/>
    <property type="molecule type" value="mRNA"/>
</dbReference>
<dbReference type="EMBL" id="AK316919">
    <property type="protein sequence ID" value="BAH19624.1"/>
    <property type="molecule type" value="mRNA"/>
</dbReference>
<dbReference type="RefSeq" id="NP_001078719.1">
    <molecule id="Q8VZC7-2"/>
    <property type="nucleotide sequence ID" value="NM_001085250.2"/>
</dbReference>
<dbReference type="RefSeq" id="NP_199364.2">
    <molecule id="Q8VZC7-1"/>
    <property type="nucleotide sequence ID" value="NM_123919.4"/>
</dbReference>
<dbReference type="SMR" id="Q8VZC7"/>
<dbReference type="BioGRID" id="19836">
    <property type="interactions" value="4"/>
</dbReference>
<dbReference type="FunCoup" id="Q8VZC7">
    <property type="interactions" value="42"/>
</dbReference>
<dbReference type="STRING" id="3702.Q8VZC7"/>
<dbReference type="iPTMnet" id="Q8VZC7"/>
<dbReference type="PaxDb" id="3702-AT5G45510.1"/>
<dbReference type="ProteomicsDB" id="224334">
    <molecule id="Q8VZC7-1"/>
</dbReference>
<dbReference type="EnsemblPlants" id="AT5G45510.1">
    <molecule id="Q8VZC7-1"/>
    <property type="protein sequence ID" value="AT5G45510.1"/>
    <property type="gene ID" value="AT5G45510"/>
</dbReference>
<dbReference type="EnsemblPlants" id="AT5G45510.2">
    <molecule id="Q8VZC7-2"/>
    <property type="protein sequence ID" value="AT5G45510.2"/>
    <property type="gene ID" value="AT5G45510"/>
</dbReference>
<dbReference type="GeneID" id="834587"/>
<dbReference type="Gramene" id="AT5G45510.1">
    <molecule id="Q8VZC7-1"/>
    <property type="protein sequence ID" value="AT5G45510.1"/>
    <property type="gene ID" value="AT5G45510"/>
</dbReference>
<dbReference type="Gramene" id="AT5G45510.2">
    <molecule id="Q8VZC7-2"/>
    <property type="protein sequence ID" value="AT5G45510.2"/>
    <property type="gene ID" value="AT5G45510"/>
</dbReference>
<dbReference type="KEGG" id="ath:AT5G45510"/>
<dbReference type="Araport" id="AT5G45510"/>
<dbReference type="TAIR" id="AT5G45510"/>
<dbReference type="InParanoid" id="Q8VZC7"/>
<dbReference type="OMA" id="MFYLREV"/>
<dbReference type="PRO" id="PR:Q8VZC7"/>
<dbReference type="Proteomes" id="UP000006548">
    <property type="component" value="Chromosome 5"/>
</dbReference>
<dbReference type="ExpressionAtlas" id="Q8VZC7">
    <property type="expression patterns" value="baseline and differential"/>
</dbReference>
<dbReference type="GO" id="GO:0005886">
    <property type="term" value="C:plasma membrane"/>
    <property type="evidence" value="ECO:0007005"/>
    <property type="project" value="TAIR"/>
</dbReference>
<dbReference type="GO" id="GO:0009536">
    <property type="term" value="C:plastid"/>
    <property type="evidence" value="ECO:0007005"/>
    <property type="project" value="TAIR"/>
</dbReference>
<dbReference type="GO" id="GO:0005524">
    <property type="term" value="F:ATP binding"/>
    <property type="evidence" value="ECO:0007669"/>
    <property type="project" value="UniProtKB-KW"/>
</dbReference>
<dbReference type="GO" id="GO:0006952">
    <property type="term" value="P:defense response"/>
    <property type="evidence" value="ECO:0007669"/>
    <property type="project" value="UniProtKB-KW"/>
</dbReference>
<dbReference type="Gene3D" id="3.40.50.300">
    <property type="entry name" value="P-loop containing nucleotide triphosphate hydrolases"/>
    <property type="match status" value="1"/>
</dbReference>
<dbReference type="Gene3D" id="3.80.10.10">
    <property type="entry name" value="Ribonuclease Inhibitor"/>
    <property type="match status" value="3"/>
</dbReference>
<dbReference type="InterPro" id="IPR032675">
    <property type="entry name" value="LRR_dom_sf"/>
</dbReference>
<dbReference type="InterPro" id="IPR027417">
    <property type="entry name" value="P-loop_NTPase"/>
</dbReference>
<dbReference type="PANTHER" id="PTHR47186:SF20">
    <property type="entry name" value="DISEASE RESISTANCE PROTEIN RPS5-LIKE"/>
    <property type="match status" value="1"/>
</dbReference>
<dbReference type="PANTHER" id="PTHR47186">
    <property type="entry name" value="LEUCINE-RICH REPEAT-CONTAINING PROTEIN 57"/>
    <property type="match status" value="1"/>
</dbReference>
<dbReference type="PRINTS" id="PR00364">
    <property type="entry name" value="DISEASERSIST"/>
</dbReference>
<dbReference type="SUPFAM" id="SSF52058">
    <property type="entry name" value="L domain-like"/>
    <property type="match status" value="1"/>
</dbReference>
<organism>
    <name type="scientific">Arabidopsis thaliana</name>
    <name type="common">Mouse-ear cress</name>
    <dbReference type="NCBI Taxonomy" id="3702"/>
    <lineage>
        <taxon>Eukaryota</taxon>
        <taxon>Viridiplantae</taxon>
        <taxon>Streptophyta</taxon>
        <taxon>Embryophyta</taxon>
        <taxon>Tracheophyta</taxon>
        <taxon>Spermatophyta</taxon>
        <taxon>Magnoliopsida</taxon>
        <taxon>eudicotyledons</taxon>
        <taxon>Gunneridae</taxon>
        <taxon>Pentapetalae</taxon>
        <taxon>rosids</taxon>
        <taxon>malvids</taxon>
        <taxon>Brassicales</taxon>
        <taxon>Brassicaceae</taxon>
        <taxon>Camelineae</taxon>
        <taxon>Arabidopsis</taxon>
    </lineage>
</organism>
<feature type="chain" id="PRO_0000212768" description="Probable disease resistance protein At5g45510">
    <location>
        <begin position="1"/>
        <end position="1222"/>
    </location>
</feature>
<feature type="repeat" description="LRR 1">
    <location>
        <begin position="654"/>
        <end position="676"/>
    </location>
</feature>
<feature type="repeat" description="LRR 2">
    <location>
        <begin position="677"/>
        <end position="699"/>
    </location>
</feature>
<feature type="repeat" description="LRR 3">
    <location>
        <begin position="702"/>
        <end position="724"/>
    </location>
</feature>
<feature type="repeat" description="LRR 4">
    <location>
        <begin position="725"/>
        <end position="747"/>
    </location>
</feature>
<feature type="repeat" description="LRR 5">
    <location>
        <begin position="785"/>
        <end position="806"/>
    </location>
</feature>
<feature type="repeat" description="LRR 6">
    <location>
        <begin position="813"/>
        <end position="835"/>
    </location>
</feature>
<feature type="repeat" description="LRR 7">
    <location>
        <begin position="836"/>
        <end position="856"/>
    </location>
</feature>
<feature type="repeat" description="LRR 8">
    <location>
        <begin position="861"/>
        <end position="883"/>
    </location>
</feature>
<feature type="repeat" description="LRR 9">
    <location>
        <begin position="884"/>
        <end position="906"/>
    </location>
</feature>
<feature type="repeat" description="LRR 10">
    <location>
        <begin position="907"/>
        <end position="929"/>
    </location>
</feature>
<feature type="repeat" description="LRR 11">
    <location>
        <begin position="931"/>
        <end position="951"/>
    </location>
</feature>
<feature type="region of interest" description="Disordered" evidence="3">
    <location>
        <begin position="171"/>
        <end position="225"/>
    </location>
</feature>
<feature type="region of interest" description="Disordered" evidence="3">
    <location>
        <begin position="263"/>
        <end position="327"/>
    </location>
</feature>
<feature type="coiled-coil region" evidence="2">
    <location>
        <begin position="122"/>
        <end position="183"/>
    </location>
</feature>
<feature type="compositionally biased region" description="Basic and acidic residues" evidence="3">
    <location>
        <begin position="171"/>
        <end position="205"/>
    </location>
</feature>
<feature type="compositionally biased region" description="Basic and acidic residues" evidence="3">
    <location>
        <begin position="212"/>
        <end position="224"/>
    </location>
</feature>
<feature type="compositionally biased region" description="Basic and acidic residues" evidence="3">
    <location>
        <begin position="263"/>
        <end position="279"/>
    </location>
</feature>
<feature type="compositionally biased region" description="Basic and acidic residues" evidence="3">
    <location>
        <begin position="286"/>
        <end position="322"/>
    </location>
</feature>
<feature type="binding site" evidence="2">
    <location>
        <begin position="49"/>
        <end position="56"/>
    </location>
    <ligand>
        <name>ATP</name>
        <dbReference type="ChEBI" id="CHEBI:30616"/>
    </ligand>
</feature>
<feature type="modified residue" description="Phosphothreonine" evidence="6 7">
    <location>
        <position position="293"/>
    </location>
</feature>
<feature type="splice variant" id="VSP_041111" description="In isoform 2." evidence="4">
    <original>DYVMVDHSDVPPPHEC</original>
    <variation>VVCA</variation>
    <location>
        <begin position="1207"/>
        <end position="1222"/>
    </location>
</feature>
<feature type="sequence conflict" description="In Ref. 4; BAH19624." evidence="5" ref="4">
    <original>S</original>
    <variation>G</variation>
    <location>
        <position position="1168"/>
    </location>
</feature>
<name>DRL36_ARATH</name>
<gene>
    <name type="ordered locus">At5g45510</name>
    <name type="ORF">MFC19.18</name>
</gene>
<protein>
    <recommendedName>
        <fullName>Probable disease resistance protein At5g45510</fullName>
    </recommendedName>
</protein>
<comment type="function">
    <text evidence="1">Probable disease resistance protein.</text>
</comment>
<comment type="alternative products">
    <event type="alternative splicing"/>
    <isoform>
        <id>Q8VZC7-1</id>
        <name>1</name>
        <sequence type="displayed"/>
    </isoform>
    <isoform>
        <id>Q8VZC7-2</id>
        <name>2</name>
        <sequence type="described" ref="VSP_041111"/>
    </isoform>
</comment>
<comment type="domain">
    <text evidence="1">The LRR repeats probably act as specificity determinant of pathogen recognition.</text>
</comment>
<comment type="similarity">
    <text evidence="5">Belongs to the disease resistance NB-LRR family.</text>
</comment>
<comment type="sequence caution" evidence="5">
    <conflict type="erroneous initiation">
        <sequence resource="EMBL-CDS" id="AAL57696"/>
    </conflict>
    <text>Truncated N-terminus.</text>
</comment>
<comment type="sequence caution" evidence="5">
    <conflict type="erroneous gene model prediction">
        <sequence resource="EMBL-CDS" id="BAB09179"/>
    </conflict>
</comment>
<comment type="online information" name="NIB-LRRS">
    <link uri="http://niblrrs.ucdavis.edu"/>
    <text>Functional and comparative genomics of disease resistance gene homologs</text>
</comment>
<sequence>MSDPLKMAAETEEIKPVPAAMGEKKDVVLCKKIVETLGGGGDQRVLLVGEAGIGKTRMAQMVDKEASKDVLCYQTLWLHLNRKFKVNDNYIKEKKFEDEWSLYENIASQLSLYSDFEETEVGERDEDEEEEKKVEDLLKDLKPKIEKYLLEKKEAVVKKLEDDKKKKEKEAAEKLEAEKKLVDPAAKKAKDHGNKNPTDAAKEKTTQVVAGGEDKAQTSSERKPYLLLILDDEGMTSEYEVMVHLGLEDFLKDHTPRKILITRRQETEEATKSGEHAEGEANDSQSGEKKEDTDGEDEIRSADKEEPESQARVKTEEKHEKVVPPTIDDLWGSTNTYGEITFQTTNESQDLLESFNLKEAEALFTSSMFFKDMPNFFFDPVPGTDEKLLNHMLKKSKSLPAAINVLAKSLEYTVKSKSYKLNKDEEERLLKEKIEMVLSAERGNPSDQESSSESPKKASGENPILLLAYKLFKTDGPLKDTILDCFWHSLDFFEHCGCVYYRDLITQWILEGYFDPVRSVEKAYQDGHSIFMELIDRGMLKIQENNVVVPEMAMRNVIDPRRGGHLGKSRLGFSRVYGGNKRKGIGKITQLDDMIKTVQAKKGDKITTILVSGDRLRRVTPKKFFKNLKELEVLGLFEPTVKPFVPSFSDQLKLLRVLIIRDCDLLKSIEELKALTKLNTLEVSGASSLSKISEKFFESFPELRSLHLSGLKIESSPPSISGLKELHCLIIKDCPLLQDLPNIQELVNLEVVDVSGASGLRTCFDNADGAKKNKSKNKNFYLLTKLQHLDFSGSQIERLPIFQDSAVAAKLHSLTRLLLRNCSKLRRLPSLKPLSGLQILDLSGTTSLVEMLEVCFEDKLELKTLNLSGTNLSELATTIEDLSSLNELLLRDCINLDAIPNIEKLENLEVIDVSGSAKLAKIEGSFEKMFYLRVVDLSGTQVETPELPADTKIHCLKRFTRADGKCFERDTWREIKEDIERDRSENASSSDAVVISQEITEKKPVEIREVESNAPRASDCTEKVDVNKERLLKVPIDRALYQKALTSLVDSKIPQEEVLEINETNKLDEEALASAEFVSFVDCTPERVKSIFEKAKLVKGCWLRMCFDIKDPFDGVDEENLKSLETLSITNLLSLETISFIAKLENLKNLSLDCCPKIKTIFPEMPASLPVLNLKHCENLEKVVVGVEVSTHTNLDLKVENCPKFGDYVMVDHSDVPPPHEC</sequence>
<accession>Q8VZC7</accession>
<accession>B9DFV7</accession>
<accession>Q9FHI5</accession>
<reference key="1">
    <citation type="journal article" date="1999" name="DNA Res.">
        <title>Structural analysis of Arabidopsis thaliana chromosome 5. IX. Sequence features of the regions of 1,011,550 bp covered by seventeen P1 and TAC clones.</title>
        <authorList>
            <person name="Kaneko T."/>
            <person name="Katoh T."/>
            <person name="Sato S."/>
            <person name="Nakamura Y."/>
            <person name="Asamizu E."/>
            <person name="Kotani H."/>
            <person name="Miyajima N."/>
            <person name="Tabata S."/>
        </authorList>
    </citation>
    <scope>NUCLEOTIDE SEQUENCE [LARGE SCALE GENOMIC DNA]</scope>
    <source>
        <strain>cv. Columbia</strain>
    </source>
</reference>
<reference key="2">
    <citation type="journal article" date="2017" name="Plant J.">
        <title>Araport11: a complete reannotation of the Arabidopsis thaliana reference genome.</title>
        <authorList>
            <person name="Cheng C.Y."/>
            <person name="Krishnakumar V."/>
            <person name="Chan A.P."/>
            <person name="Thibaud-Nissen F."/>
            <person name="Schobel S."/>
            <person name="Town C.D."/>
        </authorList>
    </citation>
    <scope>GENOME REANNOTATION</scope>
    <source>
        <strain>cv. Columbia</strain>
    </source>
</reference>
<reference key="3">
    <citation type="journal article" date="2003" name="Science">
        <title>Empirical analysis of transcriptional activity in the Arabidopsis genome.</title>
        <authorList>
            <person name="Yamada K."/>
            <person name="Lim J."/>
            <person name="Dale J.M."/>
            <person name="Chen H."/>
            <person name="Shinn P."/>
            <person name="Palm C.J."/>
            <person name="Southwick A.M."/>
            <person name="Wu H.C."/>
            <person name="Kim C.J."/>
            <person name="Nguyen M."/>
            <person name="Pham P.K."/>
            <person name="Cheuk R.F."/>
            <person name="Karlin-Newmann G."/>
            <person name="Liu S.X."/>
            <person name="Lam B."/>
            <person name="Sakano H."/>
            <person name="Wu T."/>
            <person name="Yu G."/>
            <person name="Miranda M."/>
            <person name="Quach H.L."/>
            <person name="Tripp M."/>
            <person name="Chang C.H."/>
            <person name="Lee J.M."/>
            <person name="Toriumi M.J."/>
            <person name="Chan M.M."/>
            <person name="Tang C.C."/>
            <person name="Onodera C.S."/>
            <person name="Deng J.M."/>
            <person name="Akiyama K."/>
            <person name="Ansari Y."/>
            <person name="Arakawa T."/>
            <person name="Banh J."/>
            <person name="Banno F."/>
            <person name="Bowser L."/>
            <person name="Brooks S.Y."/>
            <person name="Carninci P."/>
            <person name="Chao Q."/>
            <person name="Choy N."/>
            <person name="Enju A."/>
            <person name="Goldsmith A.D."/>
            <person name="Gurjal M."/>
            <person name="Hansen N.F."/>
            <person name="Hayashizaki Y."/>
            <person name="Johnson-Hopson C."/>
            <person name="Hsuan V.W."/>
            <person name="Iida K."/>
            <person name="Karnes M."/>
            <person name="Khan S."/>
            <person name="Koesema E."/>
            <person name="Ishida J."/>
            <person name="Jiang P.X."/>
            <person name="Jones T."/>
            <person name="Kawai J."/>
            <person name="Kamiya A."/>
            <person name="Meyers C."/>
            <person name="Nakajima M."/>
            <person name="Narusaka M."/>
            <person name="Seki M."/>
            <person name="Sakurai T."/>
            <person name="Satou M."/>
            <person name="Tamse R."/>
            <person name="Vaysberg M."/>
            <person name="Wallender E.K."/>
            <person name="Wong C."/>
            <person name="Yamamura Y."/>
            <person name="Yuan S."/>
            <person name="Shinozaki K."/>
            <person name="Davis R.W."/>
            <person name="Theologis A."/>
            <person name="Ecker J.R."/>
        </authorList>
    </citation>
    <scope>NUCLEOTIDE SEQUENCE [LARGE SCALE MRNA] (ISOFORM 1)</scope>
    <source>
        <strain>cv. Columbia</strain>
    </source>
</reference>
<reference key="4">
    <citation type="journal article" date="2009" name="DNA Res.">
        <title>Analysis of multiple occurrences of alternative splicing events in Arabidopsis thaliana using novel sequenced full-length cDNAs.</title>
        <authorList>
            <person name="Iida K."/>
            <person name="Fukami-Kobayashi K."/>
            <person name="Toyoda A."/>
            <person name="Sakaki Y."/>
            <person name="Kobayashi M."/>
            <person name="Seki M."/>
            <person name="Shinozaki K."/>
        </authorList>
    </citation>
    <scope>NUCLEOTIDE SEQUENCE [LARGE SCALE MRNA] (ISOFORM 2)</scope>
    <source>
        <strain>cv. Columbia</strain>
    </source>
</reference>
<reference key="5">
    <citation type="journal article" date="2008" name="J. Proteome Res.">
        <title>Site-specific phosphorylation profiling of Arabidopsis proteins by mass spectrometry and peptide chip analysis.</title>
        <authorList>
            <person name="de la Fuente van Bentem S."/>
            <person name="Anrather D."/>
            <person name="Dohnal I."/>
            <person name="Roitinger E."/>
            <person name="Csaszar E."/>
            <person name="Joore J."/>
            <person name="Buijnink J."/>
            <person name="Carreri A."/>
            <person name="Forzani C."/>
            <person name="Lorkovic Z.J."/>
            <person name="Barta A."/>
            <person name="Lecourieux D."/>
            <person name="Verhounig A."/>
            <person name="Jonak C."/>
            <person name="Hirt H."/>
        </authorList>
    </citation>
    <scope>PHOSPHORYLATION [LARGE SCALE ANALYSIS] AT THR-293</scope>
    <scope>IDENTIFICATION BY MASS SPECTROMETRY [LARGE SCALE ANALYSIS]</scope>
    <source>
        <tissue>Root</tissue>
    </source>
</reference>
<reference key="6">
    <citation type="journal article" date="2009" name="Plant Physiol.">
        <title>Large-scale Arabidopsis phosphoproteome profiling reveals novel chloroplast kinase substrates and phosphorylation networks.</title>
        <authorList>
            <person name="Reiland S."/>
            <person name="Messerli G."/>
            <person name="Baerenfaller K."/>
            <person name="Gerrits B."/>
            <person name="Endler A."/>
            <person name="Grossmann J."/>
            <person name="Gruissem W."/>
            <person name="Baginsky S."/>
        </authorList>
    </citation>
    <scope>PHOSPHORYLATION [LARGE SCALE ANALYSIS] AT THR-293</scope>
    <scope>IDENTIFICATION BY MASS SPECTROMETRY [LARGE SCALE ANALYSIS]</scope>
</reference>